<comment type="function">
    <text evidence="1">Catalyzes the condensation of pantoate with beta-alanine in an ATP-dependent reaction via a pantoyl-adenylate intermediate.</text>
</comment>
<comment type="catalytic activity">
    <reaction evidence="1">
        <text>(R)-pantoate + beta-alanine + ATP = (R)-pantothenate + AMP + diphosphate + H(+)</text>
        <dbReference type="Rhea" id="RHEA:10912"/>
        <dbReference type="ChEBI" id="CHEBI:15378"/>
        <dbReference type="ChEBI" id="CHEBI:15980"/>
        <dbReference type="ChEBI" id="CHEBI:29032"/>
        <dbReference type="ChEBI" id="CHEBI:30616"/>
        <dbReference type="ChEBI" id="CHEBI:33019"/>
        <dbReference type="ChEBI" id="CHEBI:57966"/>
        <dbReference type="ChEBI" id="CHEBI:456215"/>
        <dbReference type="EC" id="6.3.2.1"/>
    </reaction>
</comment>
<comment type="pathway">
    <text evidence="1">Cofactor biosynthesis; (R)-pantothenate biosynthesis; (R)-pantothenate from (R)-pantoate and beta-alanine: step 1/1.</text>
</comment>
<comment type="subunit">
    <text evidence="1">Homodimer.</text>
</comment>
<comment type="subcellular location">
    <subcellularLocation>
        <location evidence="1">Cytoplasm</location>
    </subcellularLocation>
</comment>
<comment type="miscellaneous">
    <text evidence="1">The reaction proceeds by a bi uni uni bi ping pong mechanism.</text>
</comment>
<comment type="similarity">
    <text evidence="1">Belongs to the pantothenate synthetase family.</text>
</comment>
<evidence type="ECO:0000255" key="1">
    <source>
        <dbReference type="HAMAP-Rule" id="MF_00158"/>
    </source>
</evidence>
<organism>
    <name type="scientific">Burkholderia pseudomallei (strain 668)</name>
    <dbReference type="NCBI Taxonomy" id="320373"/>
    <lineage>
        <taxon>Bacteria</taxon>
        <taxon>Pseudomonadati</taxon>
        <taxon>Pseudomonadota</taxon>
        <taxon>Betaproteobacteria</taxon>
        <taxon>Burkholderiales</taxon>
        <taxon>Burkholderiaceae</taxon>
        <taxon>Burkholderia</taxon>
        <taxon>pseudomallei group</taxon>
    </lineage>
</organism>
<sequence length="279" mass="31207">MKVISSIQELRDQLRGQNRTAFVPTMGNLHDGHLSLMRLARQHGDPVVASIFVNRLQFGPNEDFDQYPRTLQDDIEKLQKENVYVLFAPTERDMYPEPQEYRVQPPHDLGDILEGEFRPGFFTGVCTVVTKLMACVQPRVAVFGKKDYQQLMIVRRMCQQLALPVEIIAAETVRDADGLALSSRNRYLSEAERAEAPELAKTLAQVRSAVLGGERDLAAIEQRALAHLAARGWKPDYVSIRRRANLVAPSAAHIEAGEPLVVLTAAKLGATRLIDNLEI</sequence>
<feature type="chain" id="PRO_1000097040" description="Pantothenate synthetase">
    <location>
        <begin position="1"/>
        <end position="279"/>
    </location>
</feature>
<feature type="active site" description="Proton donor" evidence="1">
    <location>
        <position position="33"/>
    </location>
</feature>
<feature type="binding site" evidence="1">
    <location>
        <begin position="26"/>
        <end position="33"/>
    </location>
    <ligand>
        <name>ATP</name>
        <dbReference type="ChEBI" id="CHEBI:30616"/>
    </ligand>
</feature>
<feature type="binding site" evidence="1">
    <location>
        <position position="57"/>
    </location>
    <ligand>
        <name>(R)-pantoate</name>
        <dbReference type="ChEBI" id="CHEBI:15980"/>
    </ligand>
</feature>
<feature type="binding site" evidence="1">
    <location>
        <position position="57"/>
    </location>
    <ligand>
        <name>beta-alanine</name>
        <dbReference type="ChEBI" id="CHEBI:57966"/>
    </ligand>
</feature>
<feature type="binding site" evidence="1">
    <location>
        <begin position="144"/>
        <end position="147"/>
    </location>
    <ligand>
        <name>ATP</name>
        <dbReference type="ChEBI" id="CHEBI:30616"/>
    </ligand>
</feature>
<feature type="binding site" evidence="1">
    <location>
        <position position="150"/>
    </location>
    <ligand>
        <name>(R)-pantoate</name>
        <dbReference type="ChEBI" id="CHEBI:15980"/>
    </ligand>
</feature>
<feature type="binding site" evidence="1">
    <location>
        <position position="173"/>
    </location>
    <ligand>
        <name>ATP</name>
        <dbReference type="ChEBI" id="CHEBI:30616"/>
    </ligand>
</feature>
<feature type="binding site" evidence="1">
    <location>
        <begin position="181"/>
        <end position="184"/>
    </location>
    <ligand>
        <name>ATP</name>
        <dbReference type="ChEBI" id="CHEBI:30616"/>
    </ligand>
</feature>
<accession>A3N6X2</accession>
<reference key="1">
    <citation type="journal article" date="2010" name="Genome Biol. Evol.">
        <title>Continuing evolution of Burkholderia mallei through genome reduction and large-scale rearrangements.</title>
        <authorList>
            <person name="Losada L."/>
            <person name="Ronning C.M."/>
            <person name="DeShazer D."/>
            <person name="Woods D."/>
            <person name="Fedorova N."/>
            <person name="Kim H.S."/>
            <person name="Shabalina S.A."/>
            <person name="Pearson T.R."/>
            <person name="Brinkac L."/>
            <person name="Tan P."/>
            <person name="Nandi T."/>
            <person name="Crabtree J."/>
            <person name="Badger J."/>
            <person name="Beckstrom-Sternberg S."/>
            <person name="Saqib M."/>
            <person name="Schutzer S.E."/>
            <person name="Keim P."/>
            <person name="Nierman W.C."/>
        </authorList>
    </citation>
    <scope>NUCLEOTIDE SEQUENCE [LARGE SCALE GENOMIC DNA]</scope>
    <source>
        <strain>668</strain>
    </source>
</reference>
<proteinExistence type="inferred from homology"/>
<keyword id="KW-0067">ATP-binding</keyword>
<keyword id="KW-0963">Cytoplasm</keyword>
<keyword id="KW-0436">Ligase</keyword>
<keyword id="KW-0547">Nucleotide-binding</keyword>
<keyword id="KW-0566">Pantothenate biosynthesis</keyword>
<name>PANC_BURP6</name>
<protein>
    <recommendedName>
        <fullName evidence="1">Pantothenate synthetase</fullName>
        <shortName evidence="1">PS</shortName>
        <ecNumber evidence="1">6.3.2.1</ecNumber>
    </recommendedName>
    <alternativeName>
        <fullName evidence="1">Pantoate--beta-alanine ligase</fullName>
    </alternativeName>
    <alternativeName>
        <fullName evidence="1">Pantoate-activating enzyme</fullName>
    </alternativeName>
</protein>
<dbReference type="EC" id="6.3.2.1" evidence="1"/>
<dbReference type="EMBL" id="CP000570">
    <property type="protein sequence ID" value="ABN82433.1"/>
    <property type="molecule type" value="Genomic_DNA"/>
</dbReference>
<dbReference type="RefSeq" id="WP_004192993.1">
    <property type="nucleotide sequence ID" value="NC_009074.1"/>
</dbReference>
<dbReference type="SMR" id="A3N6X2"/>
<dbReference type="GeneID" id="93059491"/>
<dbReference type="KEGG" id="bpd:BURPS668_1043"/>
<dbReference type="HOGENOM" id="CLU_047148_0_0_4"/>
<dbReference type="UniPathway" id="UPA00028">
    <property type="reaction ID" value="UER00005"/>
</dbReference>
<dbReference type="GO" id="GO:0005829">
    <property type="term" value="C:cytosol"/>
    <property type="evidence" value="ECO:0007669"/>
    <property type="project" value="TreeGrafter"/>
</dbReference>
<dbReference type="GO" id="GO:0005524">
    <property type="term" value="F:ATP binding"/>
    <property type="evidence" value="ECO:0007669"/>
    <property type="project" value="UniProtKB-KW"/>
</dbReference>
<dbReference type="GO" id="GO:0004592">
    <property type="term" value="F:pantoate-beta-alanine ligase activity"/>
    <property type="evidence" value="ECO:0007669"/>
    <property type="project" value="UniProtKB-UniRule"/>
</dbReference>
<dbReference type="GO" id="GO:0015940">
    <property type="term" value="P:pantothenate biosynthetic process"/>
    <property type="evidence" value="ECO:0007669"/>
    <property type="project" value="UniProtKB-UniRule"/>
</dbReference>
<dbReference type="CDD" id="cd00560">
    <property type="entry name" value="PanC"/>
    <property type="match status" value="1"/>
</dbReference>
<dbReference type="Gene3D" id="3.40.50.620">
    <property type="entry name" value="HUPs"/>
    <property type="match status" value="1"/>
</dbReference>
<dbReference type="Gene3D" id="3.30.1300.10">
    <property type="entry name" value="Pantoate-beta-alanine ligase, C-terminal domain"/>
    <property type="match status" value="1"/>
</dbReference>
<dbReference type="HAMAP" id="MF_00158">
    <property type="entry name" value="PanC"/>
    <property type="match status" value="1"/>
</dbReference>
<dbReference type="InterPro" id="IPR004821">
    <property type="entry name" value="Cyt_trans-like"/>
</dbReference>
<dbReference type="InterPro" id="IPR003721">
    <property type="entry name" value="Pantoate_ligase"/>
</dbReference>
<dbReference type="InterPro" id="IPR042176">
    <property type="entry name" value="Pantoate_ligase_C"/>
</dbReference>
<dbReference type="InterPro" id="IPR014729">
    <property type="entry name" value="Rossmann-like_a/b/a_fold"/>
</dbReference>
<dbReference type="NCBIfam" id="TIGR00125">
    <property type="entry name" value="cyt_tran_rel"/>
    <property type="match status" value="1"/>
</dbReference>
<dbReference type="NCBIfam" id="TIGR00018">
    <property type="entry name" value="panC"/>
    <property type="match status" value="1"/>
</dbReference>
<dbReference type="PANTHER" id="PTHR21299">
    <property type="entry name" value="CYTIDYLATE KINASE/PANTOATE-BETA-ALANINE LIGASE"/>
    <property type="match status" value="1"/>
</dbReference>
<dbReference type="PANTHER" id="PTHR21299:SF1">
    <property type="entry name" value="PANTOATE--BETA-ALANINE LIGASE"/>
    <property type="match status" value="1"/>
</dbReference>
<dbReference type="Pfam" id="PF02569">
    <property type="entry name" value="Pantoate_ligase"/>
    <property type="match status" value="1"/>
</dbReference>
<dbReference type="SUPFAM" id="SSF52374">
    <property type="entry name" value="Nucleotidylyl transferase"/>
    <property type="match status" value="1"/>
</dbReference>
<gene>
    <name evidence="1" type="primary">panC</name>
    <name type="ordered locus">BURPS668_1043</name>
</gene>